<reference key="1">
    <citation type="journal article" date="2009" name="PLoS Genet.">
        <title>Organised genome dynamics in the Escherichia coli species results in highly diverse adaptive paths.</title>
        <authorList>
            <person name="Touchon M."/>
            <person name="Hoede C."/>
            <person name="Tenaillon O."/>
            <person name="Barbe V."/>
            <person name="Baeriswyl S."/>
            <person name="Bidet P."/>
            <person name="Bingen E."/>
            <person name="Bonacorsi S."/>
            <person name="Bouchier C."/>
            <person name="Bouvet O."/>
            <person name="Calteau A."/>
            <person name="Chiapello H."/>
            <person name="Clermont O."/>
            <person name="Cruveiller S."/>
            <person name="Danchin A."/>
            <person name="Diard M."/>
            <person name="Dossat C."/>
            <person name="Karoui M.E."/>
            <person name="Frapy E."/>
            <person name="Garry L."/>
            <person name="Ghigo J.M."/>
            <person name="Gilles A.M."/>
            <person name="Johnson J."/>
            <person name="Le Bouguenec C."/>
            <person name="Lescat M."/>
            <person name="Mangenot S."/>
            <person name="Martinez-Jehanne V."/>
            <person name="Matic I."/>
            <person name="Nassif X."/>
            <person name="Oztas S."/>
            <person name="Petit M.A."/>
            <person name="Pichon C."/>
            <person name="Rouy Z."/>
            <person name="Ruf C.S."/>
            <person name="Schneider D."/>
            <person name="Tourret J."/>
            <person name="Vacherie B."/>
            <person name="Vallenet D."/>
            <person name="Medigue C."/>
            <person name="Rocha E.P.C."/>
            <person name="Denamur E."/>
        </authorList>
    </citation>
    <scope>NUCLEOTIDE SEQUENCE [LARGE SCALE GENOMIC DNA]</scope>
    <source>
        <strain>ATCC 35469 / DSM 13698 / BCRC 15582 / CCUG 18766 / IAM 14443 / JCM 21226 / LMG 7866 / NBRC 102419 / NCTC 12128 / CDC 0568-73</strain>
    </source>
</reference>
<evidence type="ECO:0000255" key="1">
    <source>
        <dbReference type="HAMAP-Rule" id="MF_01519"/>
    </source>
</evidence>
<protein>
    <recommendedName>
        <fullName evidence="1">UPF0325 protein YaeH</fullName>
    </recommendedName>
</protein>
<accession>B7LWC4</accession>
<proteinExistence type="inferred from homology"/>
<name>YAEH_ESCF3</name>
<comment type="similarity">
    <text evidence="1">Belongs to the UPF0325 family.</text>
</comment>
<organism>
    <name type="scientific">Escherichia fergusonii (strain ATCC 35469 / DSM 13698 / CCUG 18766 / IAM 14443 / JCM 21226 / LMG 7866 / NBRC 102419 / NCTC 12128 / CDC 0568-73)</name>
    <dbReference type="NCBI Taxonomy" id="585054"/>
    <lineage>
        <taxon>Bacteria</taxon>
        <taxon>Pseudomonadati</taxon>
        <taxon>Pseudomonadota</taxon>
        <taxon>Gammaproteobacteria</taxon>
        <taxon>Enterobacterales</taxon>
        <taxon>Enterobacteriaceae</taxon>
        <taxon>Escherichia</taxon>
    </lineage>
</organism>
<gene>
    <name evidence="1" type="primary">yaeH</name>
    <name type="ordered locus">EFER_0186</name>
</gene>
<dbReference type="EMBL" id="CU928158">
    <property type="protein sequence ID" value="CAQ87767.1"/>
    <property type="molecule type" value="Genomic_DNA"/>
</dbReference>
<dbReference type="RefSeq" id="WP_000272185.1">
    <property type="nucleotide sequence ID" value="NC_011740.1"/>
</dbReference>
<dbReference type="SMR" id="B7LWC4"/>
<dbReference type="KEGG" id="efe:EFER_0186"/>
<dbReference type="HOGENOM" id="CLU_136774_0_0_6"/>
<dbReference type="OrthoDB" id="5624524at2"/>
<dbReference type="Proteomes" id="UP000000745">
    <property type="component" value="Chromosome"/>
</dbReference>
<dbReference type="HAMAP" id="MF_01519">
    <property type="entry name" value="UPF0325"/>
    <property type="match status" value="1"/>
</dbReference>
<dbReference type="InterPro" id="IPR020911">
    <property type="entry name" value="UPF0325"/>
</dbReference>
<dbReference type="NCBIfam" id="NF010213">
    <property type="entry name" value="PRK13677.1"/>
    <property type="match status" value="1"/>
</dbReference>
<dbReference type="Pfam" id="PF11944">
    <property type="entry name" value="DUF3461"/>
    <property type="match status" value="1"/>
</dbReference>
<feature type="chain" id="PRO_1000198432" description="UPF0325 protein YaeH">
    <location>
        <begin position="1"/>
        <end position="128"/>
    </location>
</feature>
<sequence>MYDNLKSLGITNPEEIDRYSLRQEANNDILKIYFQKDKGEFFAKSVKFKYPRQRKTVVADGIGQGYKEVQEISPNLRYIIDELDQICQRDRSEVDLKRKILDDLRHLESVVTNKISEIEADLEKLTRK</sequence>